<proteinExistence type="inferred from homology"/>
<sequence length="84" mass="9383">MAQTQSPLQWLATTLIRGYQVFISPILGPRCRFNPTCSHYAIEAIKVHGTAKGCWFALKRILKCHPLHPGGSDPVPPKNDRCNK</sequence>
<protein>
    <recommendedName>
        <fullName evidence="1">Putative membrane protein insertion efficiency factor</fullName>
    </recommendedName>
</protein>
<keyword id="KW-0997">Cell inner membrane</keyword>
<keyword id="KW-1003">Cell membrane</keyword>
<keyword id="KW-0472">Membrane</keyword>
<comment type="function">
    <text evidence="1">Could be involved in insertion of integral membrane proteins into the membrane.</text>
</comment>
<comment type="subcellular location">
    <subcellularLocation>
        <location evidence="1">Cell inner membrane</location>
        <topology evidence="1">Peripheral membrane protein</topology>
        <orientation evidence="1">Cytoplasmic side</orientation>
    </subcellularLocation>
</comment>
<comment type="similarity">
    <text evidence="1">Belongs to the UPF0161 family.</text>
</comment>
<feature type="chain" id="PRO_1000080195" description="Putative membrane protein insertion efficiency factor">
    <location>
        <begin position="1"/>
        <end position="84"/>
    </location>
</feature>
<dbReference type="EMBL" id="CP000891">
    <property type="protein sequence ID" value="ABX51679.1"/>
    <property type="molecule type" value="Genomic_DNA"/>
</dbReference>
<dbReference type="KEGG" id="sbn:Sbal195_4522"/>
<dbReference type="HOGENOM" id="CLU_144811_5_2_6"/>
<dbReference type="Proteomes" id="UP000000770">
    <property type="component" value="Chromosome"/>
</dbReference>
<dbReference type="GO" id="GO:0005886">
    <property type="term" value="C:plasma membrane"/>
    <property type="evidence" value="ECO:0007669"/>
    <property type="project" value="UniProtKB-SubCell"/>
</dbReference>
<dbReference type="HAMAP" id="MF_00386">
    <property type="entry name" value="UPF0161_YidD"/>
    <property type="match status" value="1"/>
</dbReference>
<dbReference type="InterPro" id="IPR002696">
    <property type="entry name" value="Membr_insert_effic_factor_YidD"/>
</dbReference>
<dbReference type="NCBIfam" id="TIGR00278">
    <property type="entry name" value="membrane protein insertion efficiency factor YidD"/>
    <property type="match status" value="1"/>
</dbReference>
<dbReference type="PANTHER" id="PTHR33383">
    <property type="entry name" value="MEMBRANE PROTEIN INSERTION EFFICIENCY FACTOR-RELATED"/>
    <property type="match status" value="1"/>
</dbReference>
<dbReference type="PANTHER" id="PTHR33383:SF1">
    <property type="entry name" value="MEMBRANE PROTEIN INSERTION EFFICIENCY FACTOR-RELATED"/>
    <property type="match status" value="1"/>
</dbReference>
<dbReference type="Pfam" id="PF01809">
    <property type="entry name" value="YidD"/>
    <property type="match status" value="1"/>
</dbReference>
<dbReference type="SMART" id="SM01234">
    <property type="entry name" value="Haemolytic"/>
    <property type="match status" value="1"/>
</dbReference>
<name>YIDD_SHEB9</name>
<accession>A9KX21</accession>
<gene>
    <name type="ordered locus">Sbal195_4522</name>
</gene>
<evidence type="ECO:0000255" key="1">
    <source>
        <dbReference type="HAMAP-Rule" id="MF_00386"/>
    </source>
</evidence>
<organism>
    <name type="scientific">Shewanella baltica (strain OS195)</name>
    <dbReference type="NCBI Taxonomy" id="399599"/>
    <lineage>
        <taxon>Bacteria</taxon>
        <taxon>Pseudomonadati</taxon>
        <taxon>Pseudomonadota</taxon>
        <taxon>Gammaproteobacteria</taxon>
        <taxon>Alteromonadales</taxon>
        <taxon>Shewanellaceae</taxon>
        <taxon>Shewanella</taxon>
    </lineage>
</organism>
<reference key="1">
    <citation type="submission" date="2007-11" db="EMBL/GenBank/DDBJ databases">
        <title>Complete sequence of chromosome of Shewanella baltica OS195.</title>
        <authorList>
            <consortium name="US DOE Joint Genome Institute"/>
            <person name="Copeland A."/>
            <person name="Lucas S."/>
            <person name="Lapidus A."/>
            <person name="Barry K."/>
            <person name="Glavina del Rio T."/>
            <person name="Dalin E."/>
            <person name="Tice H."/>
            <person name="Pitluck S."/>
            <person name="Chain P."/>
            <person name="Malfatti S."/>
            <person name="Shin M."/>
            <person name="Vergez L."/>
            <person name="Schmutz J."/>
            <person name="Larimer F."/>
            <person name="Land M."/>
            <person name="Hauser L."/>
            <person name="Kyrpides N."/>
            <person name="Kim E."/>
            <person name="Brettar I."/>
            <person name="Rodrigues J."/>
            <person name="Konstantinidis K."/>
            <person name="Klappenbach J."/>
            <person name="Hofle M."/>
            <person name="Tiedje J."/>
            <person name="Richardson P."/>
        </authorList>
    </citation>
    <scope>NUCLEOTIDE SEQUENCE [LARGE SCALE GENOMIC DNA]</scope>
    <source>
        <strain>OS195</strain>
    </source>
</reference>